<feature type="chain" id="PRO_1000089379" description="Dihydroxy-acid dehydratase">
    <location>
        <begin position="1"/>
        <end position="569"/>
    </location>
</feature>
<feature type="active site" description="Proton acceptor" evidence="1">
    <location>
        <position position="472"/>
    </location>
</feature>
<feature type="binding site" evidence="1">
    <location>
        <position position="80"/>
    </location>
    <ligand>
        <name>Mg(2+)</name>
        <dbReference type="ChEBI" id="CHEBI:18420"/>
    </ligand>
</feature>
<feature type="binding site" evidence="1">
    <location>
        <position position="121"/>
    </location>
    <ligand>
        <name>[2Fe-2S] cluster</name>
        <dbReference type="ChEBI" id="CHEBI:190135"/>
    </ligand>
</feature>
<feature type="binding site" evidence="1">
    <location>
        <position position="122"/>
    </location>
    <ligand>
        <name>Mg(2+)</name>
        <dbReference type="ChEBI" id="CHEBI:18420"/>
    </ligand>
</feature>
<feature type="binding site" description="via carbamate group" evidence="1">
    <location>
        <position position="123"/>
    </location>
    <ligand>
        <name>Mg(2+)</name>
        <dbReference type="ChEBI" id="CHEBI:18420"/>
    </ligand>
</feature>
<feature type="binding site" evidence="1">
    <location>
        <position position="194"/>
    </location>
    <ligand>
        <name>[2Fe-2S] cluster</name>
        <dbReference type="ChEBI" id="CHEBI:190135"/>
    </ligand>
</feature>
<feature type="binding site" evidence="1">
    <location>
        <position position="446"/>
    </location>
    <ligand>
        <name>Mg(2+)</name>
        <dbReference type="ChEBI" id="CHEBI:18420"/>
    </ligand>
</feature>
<feature type="modified residue" description="N6-carboxylysine" evidence="1">
    <location>
        <position position="123"/>
    </location>
</feature>
<comment type="function">
    <text evidence="1">Functions in the biosynthesis of branched-chain amino acids. Catalyzes the dehydration of (2R,3R)-2,3-dihydroxy-3-methylpentanoate (2,3-dihydroxy-3-methylvalerate) into 2-oxo-3-methylpentanoate (2-oxo-3-methylvalerate) and of (2R)-2,3-dihydroxy-3-methylbutanoate (2,3-dihydroxyisovalerate) into 2-oxo-3-methylbutanoate (2-oxoisovalerate), the penultimate precursor to L-isoleucine and L-valine, respectively.</text>
</comment>
<comment type="catalytic activity">
    <reaction evidence="1">
        <text>(2R)-2,3-dihydroxy-3-methylbutanoate = 3-methyl-2-oxobutanoate + H2O</text>
        <dbReference type="Rhea" id="RHEA:24809"/>
        <dbReference type="ChEBI" id="CHEBI:11851"/>
        <dbReference type="ChEBI" id="CHEBI:15377"/>
        <dbReference type="ChEBI" id="CHEBI:49072"/>
        <dbReference type="EC" id="4.2.1.9"/>
    </reaction>
    <physiologicalReaction direction="left-to-right" evidence="1">
        <dbReference type="Rhea" id="RHEA:24810"/>
    </physiologicalReaction>
</comment>
<comment type="catalytic activity">
    <reaction evidence="1">
        <text>(2R,3R)-2,3-dihydroxy-3-methylpentanoate = (S)-3-methyl-2-oxopentanoate + H2O</text>
        <dbReference type="Rhea" id="RHEA:27694"/>
        <dbReference type="ChEBI" id="CHEBI:15377"/>
        <dbReference type="ChEBI" id="CHEBI:35146"/>
        <dbReference type="ChEBI" id="CHEBI:49258"/>
        <dbReference type="EC" id="4.2.1.9"/>
    </reaction>
    <physiologicalReaction direction="left-to-right" evidence="1">
        <dbReference type="Rhea" id="RHEA:27695"/>
    </physiologicalReaction>
</comment>
<comment type="cofactor">
    <cofactor evidence="1">
        <name>[2Fe-2S] cluster</name>
        <dbReference type="ChEBI" id="CHEBI:190135"/>
    </cofactor>
    <text evidence="1">Binds 1 [2Fe-2S] cluster per subunit. This cluster acts as a Lewis acid cofactor.</text>
</comment>
<comment type="cofactor">
    <cofactor evidence="1">
        <name>Mg(2+)</name>
        <dbReference type="ChEBI" id="CHEBI:18420"/>
    </cofactor>
</comment>
<comment type="pathway">
    <text evidence="1">Amino-acid biosynthesis; L-isoleucine biosynthesis; L-isoleucine from 2-oxobutanoate: step 3/4.</text>
</comment>
<comment type="pathway">
    <text evidence="1">Amino-acid biosynthesis; L-valine biosynthesis; L-valine from pyruvate: step 3/4.</text>
</comment>
<comment type="subunit">
    <text evidence="1">Homodimer.</text>
</comment>
<comment type="similarity">
    <text evidence="1">Belongs to the IlvD/Edd family.</text>
</comment>
<sequence>MNSEVIKKGVERAPHRSLLRATGIIKDEADFQKPFVAIANSFAEIVPGHAHLNEFVKEIKEAVREAGGVPFEFNTLALCDGIAMNHPGMRYSLPSRELVADSVETMVQGHRFDGLICIPNCDKIVPGMLMAAVRLNIPTIFVSGGPMKAGRAKDGRPIDLISVFEGIGAFRAGKIDAGDLLELEQAACPGYGSCAGMFTANSMNCLCEALGLALPGNGTILAVDPRRSELKKWAGRQIVELIKRDLRPRDIVTPEAIDNAFALDVAMGGSTNTILHLLAVAQEAGINYPLKRVNLISARTPTLCKISPASSLHIEDVDRAGGVSAVLGELSRKPGLLNLDCLTVTGETLGETVGQVQSLDPRVIRGVEEPLSPVGGLKVLFGSLAPEGAVVKTAAVVPQMMRHQGPAVVFNSEAEASAAILGGRIKHGDVVVIRFEGPKGGPGFMEMLGPTAALVGMGLGESVALVTDGRFSGGTRGACIGHVCPEAASGGPIALIKDGDLISYDLEAGTLELLVPQEELAARKAAFTPPLRQGLTGWLARYVQMVAPASIGAVLRPACGRPPGEQDYE</sequence>
<organism>
    <name type="scientific">Desulforudis audaxviator (strain MP104C)</name>
    <dbReference type="NCBI Taxonomy" id="477974"/>
    <lineage>
        <taxon>Bacteria</taxon>
        <taxon>Bacillati</taxon>
        <taxon>Bacillota</taxon>
        <taxon>Clostridia</taxon>
        <taxon>Thermoanaerobacterales</taxon>
        <taxon>Candidatus Desulforudaceae</taxon>
        <taxon>Candidatus Desulforudis</taxon>
    </lineage>
</organism>
<protein>
    <recommendedName>
        <fullName evidence="1">Dihydroxy-acid dehydratase</fullName>
        <shortName evidence="1">DAD</shortName>
        <ecNumber evidence="1">4.2.1.9</ecNumber>
    </recommendedName>
</protein>
<evidence type="ECO:0000255" key="1">
    <source>
        <dbReference type="HAMAP-Rule" id="MF_00012"/>
    </source>
</evidence>
<proteinExistence type="inferred from homology"/>
<keyword id="KW-0001">2Fe-2S</keyword>
<keyword id="KW-0028">Amino-acid biosynthesis</keyword>
<keyword id="KW-0100">Branched-chain amino acid biosynthesis</keyword>
<keyword id="KW-0408">Iron</keyword>
<keyword id="KW-0411">Iron-sulfur</keyword>
<keyword id="KW-0456">Lyase</keyword>
<keyword id="KW-0460">Magnesium</keyword>
<keyword id="KW-0479">Metal-binding</keyword>
<keyword id="KW-1185">Reference proteome</keyword>
<dbReference type="EC" id="4.2.1.9" evidence="1"/>
<dbReference type="EMBL" id="CP000860">
    <property type="protein sequence ID" value="ACA59081.1"/>
    <property type="molecule type" value="Genomic_DNA"/>
</dbReference>
<dbReference type="RefSeq" id="WP_012301670.1">
    <property type="nucleotide sequence ID" value="NC_010424.1"/>
</dbReference>
<dbReference type="SMR" id="B1I250"/>
<dbReference type="STRING" id="477974.Daud_0540"/>
<dbReference type="KEGG" id="dau:Daud_0540"/>
<dbReference type="eggNOG" id="COG0129">
    <property type="taxonomic scope" value="Bacteria"/>
</dbReference>
<dbReference type="HOGENOM" id="CLU_014271_4_2_9"/>
<dbReference type="OrthoDB" id="9807077at2"/>
<dbReference type="UniPathway" id="UPA00047">
    <property type="reaction ID" value="UER00057"/>
</dbReference>
<dbReference type="UniPathway" id="UPA00049">
    <property type="reaction ID" value="UER00061"/>
</dbReference>
<dbReference type="Proteomes" id="UP000008544">
    <property type="component" value="Chromosome"/>
</dbReference>
<dbReference type="GO" id="GO:0005829">
    <property type="term" value="C:cytosol"/>
    <property type="evidence" value="ECO:0007669"/>
    <property type="project" value="TreeGrafter"/>
</dbReference>
<dbReference type="GO" id="GO:0051537">
    <property type="term" value="F:2 iron, 2 sulfur cluster binding"/>
    <property type="evidence" value="ECO:0007669"/>
    <property type="project" value="UniProtKB-UniRule"/>
</dbReference>
<dbReference type="GO" id="GO:0004160">
    <property type="term" value="F:dihydroxy-acid dehydratase activity"/>
    <property type="evidence" value="ECO:0007669"/>
    <property type="project" value="UniProtKB-UniRule"/>
</dbReference>
<dbReference type="GO" id="GO:0000287">
    <property type="term" value="F:magnesium ion binding"/>
    <property type="evidence" value="ECO:0007669"/>
    <property type="project" value="UniProtKB-UniRule"/>
</dbReference>
<dbReference type="GO" id="GO:0009097">
    <property type="term" value="P:isoleucine biosynthetic process"/>
    <property type="evidence" value="ECO:0007669"/>
    <property type="project" value="UniProtKB-UniRule"/>
</dbReference>
<dbReference type="GO" id="GO:0009099">
    <property type="term" value="P:L-valine biosynthetic process"/>
    <property type="evidence" value="ECO:0007669"/>
    <property type="project" value="UniProtKB-UniRule"/>
</dbReference>
<dbReference type="FunFam" id="3.50.30.80:FF:000001">
    <property type="entry name" value="Dihydroxy-acid dehydratase"/>
    <property type="match status" value="1"/>
</dbReference>
<dbReference type="Gene3D" id="3.50.30.80">
    <property type="entry name" value="IlvD/EDD C-terminal domain-like"/>
    <property type="match status" value="1"/>
</dbReference>
<dbReference type="HAMAP" id="MF_00012">
    <property type="entry name" value="IlvD"/>
    <property type="match status" value="1"/>
</dbReference>
<dbReference type="InterPro" id="IPR042096">
    <property type="entry name" value="Dihydro-acid_dehy_C"/>
</dbReference>
<dbReference type="InterPro" id="IPR004404">
    <property type="entry name" value="DihydroxyA_deHydtase"/>
</dbReference>
<dbReference type="InterPro" id="IPR020558">
    <property type="entry name" value="DiOHA_6PGluconate_deHydtase_CS"/>
</dbReference>
<dbReference type="InterPro" id="IPR056740">
    <property type="entry name" value="ILV_EDD_C"/>
</dbReference>
<dbReference type="InterPro" id="IPR000581">
    <property type="entry name" value="ILV_EDD_N"/>
</dbReference>
<dbReference type="InterPro" id="IPR037237">
    <property type="entry name" value="IlvD/EDD_N"/>
</dbReference>
<dbReference type="NCBIfam" id="TIGR00110">
    <property type="entry name" value="ilvD"/>
    <property type="match status" value="1"/>
</dbReference>
<dbReference type="NCBIfam" id="NF002068">
    <property type="entry name" value="PRK00911.1"/>
    <property type="match status" value="1"/>
</dbReference>
<dbReference type="PANTHER" id="PTHR43661">
    <property type="entry name" value="D-XYLONATE DEHYDRATASE"/>
    <property type="match status" value="1"/>
</dbReference>
<dbReference type="PANTHER" id="PTHR43661:SF3">
    <property type="entry name" value="D-XYLONATE DEHYDRATASE YAGF-RELATED"/>
    <property type="match status" value="1"/>
</dbReference>
<dbReference type="Pfam" id="PF24877">
    <property type="entry name" value="ILV_EDD_C"/>
    <property type="match status" value="1"/>
</dbReference>
<dbReference type="Pfam" id="PF00920">
    <property type="entry name" value="ILVD_EDD_N"/>
    <property type="match status" value="1"/>
</dbReference>
<dbReference type="SUPFAM" id="SSF143975">
    <property type="entry name" value="IlvD/EDD N-terminal domain-like"/>
    <property type="match status" value="1"/>
</dbReference>
<dbReference type="SUPFAM" id="SSF52016">
    <property type="entry name" value="LeuD/IlvD-like"/>
    <property type="match status" value="1"/>
</dbReference>
<dbReference type="PROSITE" id="PS00886">
    <property type="entry name" value="ILVD_EDD_1"/>
    <property type="match status" value="1"/>
</dbReference>
<dbReference type="PROSITE" id="PS00887">
    <property type="entry name" value="ILVD_EDD_2"/>
    <property type="match status" value="1"/>
</dbReference>
<reference key="1">
    <citation type="submission" date="2007-10" db="EMBL/GenBank/DDBJ databases">
        <title>Complete sequence of chromosome of Desulforudis audaxviator MP104C.</title>
        <authorList>
            <person name="Copeland A."/>
            <person name="Lucas S."/>
            <person name="Lapidus A."/>
            <person name="Barry K."/>
            <person name="Glavina del Rio T."/>
            <person name="Dalin E."/>
            <person name="Tice H."/>
            <person name="Bruce D."/>
            <person name="Pitluck S."/>
            <person name="Lowry S.R."/>
            <person name="Larimer F."/>
            <person name="Land M.L."/>
            <person name="Hauser L."/>
            <person name="Kyrpides N."/>
            <person name="Ivanova N.N."/>
            <person name="Richardson P."/>
        </authorList>
    </citation>
    <scope>NUCLEOTIDE SEQUENCE [LARGE SCALE GENOMIC DNA]</scope>
    <source>
        <strain>MP104C</strain>
    </source>
</reference>
<gene>
    <name evidence="1" type="primary">ilvD</name>
    <name type="ordered locus">Daud_0540</name>
</gene>
<accession>B1I250</accession>
<name>ILVD_DESAP</name>